<protein>
    <recommendedName>
        <fullName evidence="1">Large ribosomal subunit protein bL33</fullName>
    </recommendedName>
    <alternativeName>
        <fullName evidence="2">50S ribosomal protein L33</fullName>
    </alternativeName>
</protein>
<gene>
    <name evidence="1" type="primary">rpmG</name>
    <name type="ordered locus">A1E_05625</name>
</gene>
<accession>A8F0A3</accession>
<sequence length="56" mass="6632">MAKKNKNVLVRLVSTAGTGVFWVKKRNPKTQTEKLSFRKYDKVVRKHVLFKEEKIK</sequence>
<name>RL33_RICCK</name>
<dbReference type="EMBL" id="CP000409">
    <property type="protein sequence ID" value="ABV74036.1"/>
    <property type="molecule type" value="Genomic_DNA"/>
</dbReference>
<dbReference type="RefSeq" id="WP_004997072.1">
    <property type="nucleotide sequence ID" value="NC_009879.1"/>
</dbReference>
<dbReference type="SMR" id="A8F0A3"/>
<dbReference type="STRING" id="293613.A1E_05625"/>
<dbReference type="GeneID" id="95361741"/>
<dbReference type="KEGG" id="rcm:A1E_05625"/>
<dbReference type="eggNOG" id="COG0267">
    <property type="taxonomic scope" value="Bacteria"/>
</dbReference>
<dbReference type="HOGENOM" id="CLU_190949_1_0_5"/>
<dbReference type="Proteomes" id="UP000007056">
    <property type="component" value="Chromosome"/>
</dbReference>
<dbReference type="GO" id="GO:0005737">
    <property type="term" value="C:cytoplasm"/>
    <property type="evidence" value="ECO:0007669"/>
    <property type="project" value="UniProtKB-ARBA"/>
</dbReference>
<dbReference type="GO" id="GO:0015934">
    <property type="term" value="C:large ribosomal subunit"/>
    <property type="evidence" value="ECO:0007669"/>
    <property type="project" value="TreeGrafter"/>
</dbReference>
<dbReference type="GO" id="GO:0003735">
    <property type="term" value="F:structural constituent of ribosome"/>
    <property type="evidence" value="ECO:0007669"/>
    <property type="project" value="InterPro"/>
</dbReference>
<dbReference type="GO" id="GO:0006412">
    <property type="term" value="P:translation"/>
    <property type="evidence" value="ECO:0007669"/>
    <property type="project" value="UniProtKB-UniRule"/>
</dbReference>
<dbReference type="Gene3D" id="2.20.28.120">
    <property type="entry name" value="Ribosomal protein L33"/>
    <property type="match status" value="1"/>
</dbReference>
<dbReference type="HAMAP" id="MF_00294">
    <property type="entry name" value="Ribosomal_bL33"/>
    <property type="match status" value="1"/>
</dbReference>
<dbReference type="InterPro" id="IPR001705">
    <property type="entry name" value="Ribosomal_bL33"/>
</dbReference>
<dbReference type="InterPro" id="IPR018264">
    <property type="entry name" value="Ribosomal_bL33_CS"/>
</dbReference>
<dbReference type="InterPro" id="IPR038584">
    <property type="entry name" value="Ribosomal_bL33_sf"/>
</dbReference>
<dbReference type="InterPro" id="IPR011332">
    <property type="entry name" value="Ribosomal_zn-bd"/>
</dbReference>
<dbReference type="NCBIfam" id="NF001860">
    <property type="entry name" value="PRK00595.1"/>
    <property type="match status" value="1"/>
</dbReference>
<dbReference type="NCBIfam" id="TIGR01023">
    <property type="entry name" value="rpmG_bact"/>
    <property type="match status" value="1"/>
</dbReference>
<dbReference type="PANTHER" id="PTHR15238">
    <property type="entry name" value="54S RIBOSOMAL PROTEIN L39, MITOCHONDRIAL"/>
    <property type="match status" value="1"/>
</dbReference>
<dbReference type="PANTHER" id="PTHR15238:SF1">
    <property type="entry name" value="LARGE RIBOSOMAL SUBUNIT PROTEIN BL33M"/>
    <property type="match status" value="1"/>
</dbReference>
<dbReference type="Pfam" id="PF00471">
    <property type="entry name" value="Ribosomal_L33"/>
    <property type="match status" value="1"/>
</dbReference>
<dbReference type="SUPFAM" id="SSF57829">
    <property type="entry name" value="Zn-binding ribosomal proteins"/>
    <property type="match status" value="1"/>
</dbReference>
<dbReference type="PROSITE" id="PS00582">
    <property type="entry name" value="RIBOSOMAL_L33"/>
    <property type="match status" value="1"/>
</dbReference>
<keyword id="KW-0687">Ribonucleoprotein</keyword>
<keyword id="KW-0689">Ribosomal protein</keyword>
<feature type="chain" id="PRO_1000004187" description="Large ribosomal subunit protein bL33">
    <location>
        <begin position="1"/>
        <end position="56"/>
    </location>
</feature>
<proteinExistence type="inferred from homology"/>
<organism>
    <name type="scientific">Rickettsia canadensis (strain McKiel)</name>
    <dbReference type="NCBI Taxonomy" id="293613"/>
    <lineage>
        <taxon>Bacteria</taxon>
        <taxon>Pseudomonadati</taxon>
        <taxon>Pseudomonadota</taxon>
        <taxon>Alphaproteobacteria</taxon>
        <taxon>Rickettsiales</taxon>
        <taxon>Rickettsiaceae</taxon>
        <taxon>Rickettsieae</taxon>
        <taxon>Rickettsia</taxon>
        <taxon>belli group</taxon>
    </lineage>
</organism>
<reference key="1">
    <citation type="submission" date="2007-09" db="EMBL/GenBank/DDBJ databases">
        <title>Complete genome sequence of Rickettsia canadensis.</title>
        <authorList>
            <person name="Madan A."/>
            <person name="Fahey J."/>
            <person name="Helton E."/>
            <person name="Ketteman M."/>
            <person name="Madan A."/>
            <person name="Rodrigues S."/>
            <person name="Sanchez A."/>
            <person name="Whiting M."/>
            <person name="Dasch G."/>
            <person name="Eremeeva M."/>
        </authorList>
    </citation>
    <scope>NUCLEOTIDE SEQUENCE [LARGE SCALE GENOMIC DNA]</scope>
    <source>
        <strain>McKiel</strain>
    </source>
</reference>
<comment type="similarity">
    <text evidence="1">Belongs to the bacterial ribosomal protein bL33 family.</text>
</comment>
<evidence type="ECO:0000255" key="1">
    <source>
        <dbReference type="HAMAP-Rule" id="MF_00294"/>
    </source>
</evidence>
<evidence type="ECO:0000305" key="2"/>